<proteinExistence type="inferred from homology"/>
<protein>
    <recommendedName>
        <fullName evidence="1">ATP synthase subunit c</fullName>
    </recommendedName>
    <alternativeName>
        <fullName evidence="1">ATP synthase F(0) sector subunit c</fullName>
    </alternativeName>
    <alternativeName>
        <fullName evidence="1">F-type ATPase subunit c</fullName>
        <shortName evidence="1">F-ATPase subunit c</shortName>
    </alternativeName>
    <alternativeName>
        <fullName evidence="1">Lipid-binding protein</fullName>
    </alternativeName>
</protein>
<organism>
    <name type="scientific">Chloroflexus aurantiacus (strain ATCC 29364 / DSM 637 / Y-400-fl)</name>
    <dbReference type="NCBI Taxonomy" id="480224"/>
    <lineage>
        <taxon>Bacteria</taxon>
        <taxon>Bacillati</taxon>
        <taxon>Chloroflexota</taxon>
        <taxon>Chloroflexia</taxon>
        <taxon>Chloroflexales</taxon>
        <taxon>Chloroflexineae</taxon>
        <taxon>Chloroflexaceae</taxon>
        <taxon>Chloroflexus</taxon>
    </lineage>
</organism>
<feature type="chain" id="PRO_1000184347" description="ATP synthase subunit c">
    <location>
        <begin position="1"/>
        <end position="76"/>
    </location>
</feature>
<feature type="transmembrane region" description="Helical" evidence="1">
    <location>
        <begin position="7"/>
        <end position="27"/>
    </location>
</feature>
<feature type="transmembrane region" description="Helical" evidence="1">
    <location>
        <begin position="50"/>
        <end position="70"/>
    </location>
</feature>
<feature type="site" description="Reversibly protonated during proton transport" evidence="1">
    <location>
        <position position="57"/>
    </location>
</feature>
<accession>B9LBM5</accession>
<keyword id="KW-0066">ATP synthesis</keyword>
<keyword id="KW-1003">Cell membrane</keyword>
<keyword id="KW-0138">CF(0)</keyword>
<keyword id="KW-0375">Hydrogen ion transport</keyword>
<keyword id="KW-0406">Ion transport</keyword>
<keyword id="KW-0446">Lipid-binding</keyword>
<keyword id="KW-0472">Membrane</keyword>
<keyword id="KW-0812">Transmembrane</keyword>
<keyword id="KW-1133">Transmembrane helix</keyword>
<keyword id="KW-0813">Transport</keyword>
<reference key="1">
    <citation type="submission" date="2009-01" db="EMBL/GenBank/DDBJ databases">
        <title>Complete sequence of Chloroflexus sp. Y-400-fl.</title>
        <authorList>
            <consortium name="US DOE Joint Genome Institute"/>
            <person name="Lucas S."/>
            <person name="Copeland A."/>
            <person name="Lapidus A."/>
            <person name="Glavina del Rio T."/>
            <person name="Dalin E."/>
            <person name="Tice H."/>
            <person name="Bruce D."/>
            <person name="Goodwin L."/>
            <person name="Pitluck S."/>
            <person name="Sims D."/>
            <person name="Kiss H."/>
            <person name="Brettin T."/>
            <person name="Detter J.C."/>
            <person name="Han C."/>
            <person name="Larimer F."/>
            <person name="Land M."/>
            <person name="Hauser L."/>
            <person name="Kyrpides N."/>
            <person name="Ovchinnikova G."/>
            <person name="Bryant D.A."/>
            <person name="Richardson P."/>
        </authorList>
    </citation>
    <scope>NUCLEOTIDE SEQUENCE [LARGE SCALE GENOMIC DNA]</scope>
    <source>
        <strain>ATCC 29364 / DSM 637 / Y-400-fl</strain>
    </source>
</reference>
<evidence type="ECO:0000255" key="1">
    <source>
        <dbReference type="HAMAP-Rule" id="MF_01396"/>
    </source>
</evidence>
<gene>
    <name evidence="1" type="primary">atpE</name>
    <name type="ordered locus">Chy400_3292</name>
</gene>
<comment type="function">
    <text evidence="1">F(1)F(0) ATP synthase produces ATP from ADP in the presence of a proton or sodium gradient. F-type ATPases consist of two structural domains, F(1) containing the extramembraneous catalytic core and F(0) containing the membrane proton channel, linked together by a central stalk and a peripheral stalk. During catalysis, ATP synthesis in the catalytic domain of F(1) is coupled via a rotary mechanism of the central stalk subunits to proton translocation.</text>
</comment>
<comment type="function">
    <text evidence="1">Key component of the F(0) channel; it plays a direct role in translocation across the membrane. A homomeric c-ring of between 10-14 subunits forms the central stalk rotor element with the F(1) delta and epsilon subunits.</text>
</comment>
<comment type="subunit">
    <text evidence="1">F-type ATPases have 2 components, F(1) - the catalytic core - and F(0) - the membrane proton channel. F(1) has five subunits: alpha(3), beta(3), gamma(1), delta(1), epsilon(1). F(0) has four main subunits: a(1), b(1), b'(1) and c(10-14). The alpha and beta chains form an alternating ring which encloses part of the gamma chain. F(1) is attached to F(0) by a central stalk formed by the gamma and epsilon chains, while a peripheral stalk is formed by the delta, b and b' chains.</text>
</comment>
<comment type="subcellular location">
    <subcellularLocation>
        <location evidence="1">Cell membrane</location>
        <topology evidence="1">Multi-pass membrane protein</topology>
    </subcellularLocation>
</comment>
<comment type="similarity">
    <text evidence="1">Belongs to the ATPase C chain family.</text>
</comment>
<name>ATPL_CHLSY</name>
<dbReference type="EMBL" id="CP001364">
    <property type="protein sequence ID" value="ACM54670.1"/>
    <property type="molecule type" value="Genomic_DNA"/>
</dbReference>
<dbReference type="SMR" id="B9LBM5"/>
<dbReference type="KEGG" id="chl:Chy400_3292"/>
<dbReference type="HOGENOM" id="CLU_148047_5_0_0"/>
<dbReference type="OrthoDB" id="166993at2"/>
<dbReference type="GO" id="GO:0005886">
    <property type="term" value="C:plasma membrane"/>
    <property type="evidence" value="ECO:0007669"/>
    <property type="project" value="UniProtKB-SubCell"/>
</dbReference>
<dbReference type="GO" id="GO:0045259">
    <property type="term" value="C:proton-transporting ATP synthase complex"/>
    <property type="evidence" value="ECO:0007669"/>
    <property type="project" value="UniProtKB-KW"/>
</dbReference>
<dbReference type="GO" id="GO:0033177">
    <property type="term" value="C:proton-transporting two-sector ATPase complex, proton-transporting domain"/>
    <property type="evidence" value="ECO:0007669"/>
    <property type="project" value="InterPro"/>
</dbReference>
<dbReference type="GO" id="GO:0008289">
    <property type="term" value="F:lipid binding"/>
    <property type="evidence" value="ECO:0007669"/>
    <property type="project" value="UniProtKB-KW"/>
</dbReference>
<dbReference type="GO" id="GO:0046933">
    <property type="term" value="F:proton-transporting ATP synthase activity, rotational mechanism"/>
    <property type="evidence" value="ECO:0007669"/>
    <property type="project" value="UniProtKB-UniRule"/>
</dbReference>
<dbReference type="CDD" id="cd18121">
    <property type="entry name" value="ATP-synt_Fo_c"/>
    <property type="match status" value="1"/>
</dbReference>
<dbReference type="FunFam" id="1.20.20.10:FF:000004">
    <property type="entry name" value="ATP synthase subunit c"/>
    <property type="match status" value="1"/>
</dbReference>
<dbReference type="Gene3D" id="1.20.20.10">
    <property type="entry name" value="F1F0 ATP synthase subunit C"/>
    <property type="match status" value="1"/>
</dbReference>
<dbReference type="HAMAP" id="MF_01396">
    <property type="entry name" value="ATP_synth_c_bact"/>
    <property type="match status" value="1"/>
</dbReference>
<dbReference type="InterPro" id="IPR005953">
    <property type="entry name" value="ATP_synth_csu_bac/chlpt"/>
</dbReference>
<dbReference type="InterPro" id="IPR000454">
    <property type="entry name" value="ATP_synth_F0_csu"/>
</dbReference>
<dbReference type="InterPro" id="IPR020537">
    <property type="entry name" value="ATP_synth_F0_csu_DDCD_BS"/>
</dbReference>
<dbReference type="InterPro" id="IPR038662">
    <property type="entry name" value="ATP_synth_F0_csu_sf"/>
</dbReference>
<dbReference type="InterPro" id="IPR002379">
    <property type="entry name" value="ATPase_proteolipid_c-like_dom"/>
</dbReference>
<dbReference type="InterPro" id="IPR035921">
    <property type="entry name" value="F/V-ATP_Csub_sf"/>
</dbReference>
<dbReference type="NCBIfam" id="TIGR01260">
    <property type="entry name" value="ATP_synt_c"/>
    <property type="match status" value="1"/>
</dbReference>
<dbReference type="PANTHER" id="PTHR10031">
    <property type="entry name" value="ATP SYNTHASE LIPID-BINDING PROTEIN, MITOCHONDRIAL"/>
    <property type="match status" value="1"/>
</dbReference>
<dbReference type="PANTHER" id="PTHR10031:SF0">
    <property type="entry name" value="ATPASE PROTEIN 9"/>
    <property type="match status" value="1"/>
</dbReference>
<dbReference type="Pfam" id="PF00137">
    <property type="entry name" value="ATP-synt_C"/>
    <property type="match status" value="1"/>
</dbReference>
<dbReference type="PRINTS" id="PR00124">
    <property type="entry name" value="ATPASEC"/>
</dbReference>
<dbReference type="SUPFAM" id="SSF81333">
    <property type="entry name" value="F1F0 ATP synthase subunit C"/>
    <property type="match status" value="1"/>
</dbReference>
<dbReference type="PROSITE" id="PS00605">
    <property type="entry name" value="ATPASE_C"/>
    <property type="match status" value="1"/>
</dbReference>
<sequence>MEGLNLVATALAVGLGAIGPGVGIGIIVSGAVQAIGRNPEIENRVVTYMFIGIAFTEALAIFGLVIAFLIGFGVLQ</sequence>